<comment type="function">
    <text>Mitochondrial membrane ATP synthase (F(1)F(0) ATP synthase or Complex V) produces ATP from ADP in the presence of a proton gradient across the membrane which is generated by electron transport complexes of the respiratory chain. F-type ATPases consist of two structural domains, F(1) - containing the extramembraneous catalytic core and F(0) - containing the membrane proton channel, linked together by a central stalk and a peripheral stalk. During catalysis, ATP synthesis in the catalytic domain of F(1) is coupled via a rotary mechanism of the central stalk subunits to proton translocation. Part of the complex F(0) domain. A homomeric c-ring of probably 10 subunits is part of the complex rotary element.</text>
</comment>
<comment type="subunit">
    <text>F-type ATPases have 2 components, CF(1) - the catalytic core - and CF(0) - the membrane proton channel. CF(1) has five subunits: alpha(3), beta(3), gamma(1), delta(1), epsilon(1). CF(0) has three main subunits: a, b and c.</text>
</comment>
<comment type="subcellular location">
    <subcellularLocation>
        <location evidence="1">Mitochondrion membrane</location>
    </subcellularLocation>
</comment>
<comment type="similarity">
    <text evidence="1">Belongs to the ATPase C chain family.</text>
</comment>
<evidence type="ECO:0000305" key="1"/>
<gene>
    <name type="primary">ATP9</name>
</gene>
<reference key="1">
    <citation type="journal article" date="1993" name="Mol. Cell. Biol.">
        <title>Linear mitochondrial DNAs of yeasts: frequency of occurrence and general features.</title>
        <authorList>
            <person name="Fukuhara H."/>
            <person name="Sor F."/>
            <person name="Drissi R."/>
            <person name="Dinouel N."/>
            <person name="Miyakawa I."/>
            <person name="Rousset S."/>
            <person name="Viola A.M."/>
        </authorList>
    </citation>
    <scope>NUCLEOTIDE SEQUENCE [GENOMIC DNA]</scope>
    <source>
        <strain>CBS 2887</strain>
    </source>
</reference>
<dbReference type="EMBL" id="X66593">
    <property type="protein sequence ID" value="CAA47156.1"/>
    <property type="molecule type" value="Genomic_DNA"/>
</dbReference>
<dbReference type="SMR" id="Q06838"/>
<dbReference type="GO" id="GO:0031966">
    <property type="term" value="C:mitochondrial membrane"/>
    <property type="evidence" value="ECO:0007669"/>
    <property type="project" value="UniProtKB-SubCell"/>
</dbReference>
<dbReference type="GO" id="GO:0045259">
    <property type="term" value="C:proton-transporting ATP synthase complex"/>
    <property type="evidence" value="ECO:0007669"/>
    <property type="project" value="UniProtKB-KW"/>
</dbReference>
<dbReference type="GO" id="GO:0008289">
    <property type="term" value="F:lipid binding"/>
    <property type="evidence" value="ECO:0007669"/>
    <property type="project" value="UniProtKB-KW"/>
</dbReference>
<dbReference type="GO" id="GO:1902600">
    <property type="term" value="P:proton transmembrane transport"/>
    <property type="evidence" value="ECO:0007669"/>
    <property type="project" value="UniProtKB-KW"/>
</dbReference>
<proteinExistence type="inferred from homology"/>
<sequence>MQLVLAAKYIGAAIATIGLIGADDKTSNM</sequence>
<accession>Q06838</accession>
<name>ATP9_WICPI</name>
<feature type="chain" id="PRO_0000112234" description="ATP synthase subunit 9, mitochondrial">
    <location>
        <begin position="1"/>
        <end position="29" status="greater than"/>
    </location>
</feature>
<feature type="non-terminal residue">
    <location>
        <position position="29"/>
    </location>
</feature>
<geneLocation type="mitochondrion"/>
<protein>
    <recommendedName>
        <fullName>ATP synthase subunit 9, mitochondrial</fullName>
    </recommendedName>
    <alternativeName>
        <fullName>Lipid-binding protein</fullName>
    </alternativeName>
</protein>
<organism>
    <name type="scientific">Wickerhamomyces pijperi</name>
    <name type="common">Yeast</name>
    <name type="synonym">Pichia pijperi</name>
    <dbReference type="NCBI Taxonomy" id="599730"/>
    <lineage>
        <taxon>Eukaryota</taxon>
        <taxon>Fungi</taxon>
        <taxon>Dikarya</taxon>
        <taxon>Ascomycota</taxon>
        <taxon>Saccharomycotina</taxon>
        <taxon>Saccharomycetes</taxon>
        <taxon>Phaffomycetales</taxon>
        <taxon>Wickerhamomycetaceae</taxon>
        <taxon>Wickerhamomyces</taxon>
    </lineage>
</organism>
<keyword id="KW-0138">CF(0)</keyword>
<keyword id="KW-0375">Hydrogen ion transport</keyword>
<keyword id="KW-0406">Ion transport</keyword>
<keyword id="KW-0446">Lipid-binding</keyword>
<keyword id="KW-0472">Membrane</keyword>
<keyword id="KW-0496">Mitochondrion</keyword>
<keyword id="KW-0812">Transmembrane</keyword>
<keyword id="KW-0813">Transport</keyword>